<reference key="1">
    <citation type="journal article" date="2011" name="MBio">
        <title>Novel metabolic attributes of the genus Cyanothece, comprising a group of unicellular nitrogen-fixing Cyanobacteria.</title>
        <authorList>
            <person name="Bandyopadhyay A."/>
            <person name="Elvitigala T."/>
            <person name="Welsh E."/>
            <person name="Stockel J."/>
            <person name="Liberton M."/>
            <person name="Min H."/>
            <person name="Sherman L.A."/>
            <person name="Pakrasi H.B."/>
        </authorList>
    </citation>
    <scope>NUCLEOTIDE SEQUENCE [LARGE SCALE GENOMIC DNA]</scope>
    <source>
        <strain>PCC 7425 / ATCC 29141</strain>
    </source>
</reference>
<organism>
    <name type="scientific">Cyanothece sp. (strain PCC 7425 / ATCC 29141)</name>
    <dbReference type="NCBI Taxonomy" id="395961"/>
    <lineage>
        <taxon>Bacteria</taxon>
        <taxon>Bacillati</taxon>
        <taxon>Cyanobacteriota</taxon>
        <taxon>Cyanophyceae</taxon>
        <taxon>Gomontiellales</taxon>
        <taxon>Cyanothecaceae</taxon>
        <taxon>Cyanothece</taxon>
    </lineage>
</organism>
<gene>
    <name evidence="1" type="primary">nadA</name>
    <name type="ordered locus">Cyan7425_4975</name>
</gene>
<protein>
    <recommendedName>
        <fullName evidence="1">Quinolinate synthase</fullName>
        <ecNumber evidence="1">2.5.1.72</ecNumber>
    </recommendedName>
</protein>
<comment type="function">
    <text evidence="1">Catalyzes the condensation of iminoaspartate with dihydroxyacetone phosphate to form quinolinate.</text>
</comment>
<comment type="catalytic activity">
    <reaction evidence="1">
        <text>iminosuccinate + dihydroxyacetone phosphate = quinolinate + phosphate + 2 H2O + H(+)</text>
        <dbReference type="Rhea" id="RHEA:25888"/>
        <dbReference type="ChEBI" id="CHEBI:15377"/>
        <dbReference type="ChEBI" id="CHEBI:15378"/>
        <dbReference type="ChEBI" id="CHEBI:29959"/>
        <dbReference type="ChEBI" id="CHEBI:43474"/>
        <dbReference type="ChEBI" id="CHEBI:57642"/>
        <dbReference type="ChEBI" id="CHEBI:77875"/>
        <dbReference type="EC" id="2.5.1.72"/>
    </reaction>
    <physiologicalReaction direction="left-to-right" evidence="1">
        <dbReference type="Rhea" id="RHEA:25889"/>
    </physiologicalReaction>
</comment>
<comment type="cofactor">
    <cofactor evidence="1">
        <name>[4Fe-4S] cluster</name>
        <dbReference type="ChEBI" id="CHEBI:49883"/>
    </cofactor>
    <text evidence="1">Binds 1 [4Fe-4S] cluster per subunit.</text>
</comment>
<comment type="pathway">
    <text evidence="1">Cofactor biosynthesis; NAD(+) biosynthesis; quinolinate from iminoaspartate: step 1/1.</text>
</comment>
<comment type="subcellular location">
    <subcellularLocation>
        <location evidence="1">Cytoplasm</location>
    </subcellularLocation>
</comment>
<comment type="similarity">
    <text evidence="1">Belongs to the quinolinate synthase family. Type 2 subfamily.</text>
</comment>
<feature type="chain" id="PRO_1000146812" description="Quinolinate synthase">
    <location>
        <begin position="1"/>
        <end position="322"/>
    </location>
</feature>
<feature type="binding site" evidence="1">
    <location>
        <position position="38"/>
    </location>
    <ligand>
        <name>iminosuccinate</name>
        <dbReference type="ChEBI" id="CHEBI:77875"/>
    </ligand>
</feature>
<feature type="binding site" evidence="1">
    <location>
        <position position="55"/>
    </location>
    <ligand>
        <name>iminosuccinate</name>
        <dbReference type="ChEBI" id="CHEBI:77875"/>
    </ligand>
</feature>
<feature type="binding site" evidence="1">
    <location>
        <position position="100"/>
    </location>
    <ligand>
        <name>[4Fe-4S] cluster</name>
        <dbReference type="ChEBI" id="CHEBI:49883"/>
    </ligand>
</feature>
<feature type="binding site" evidence="1">
    <location>
        <begin position="126"/>
        <end position="128"/>
    </location>
    <ligand>
        <name>iminosuccinate</name>
        <dbReference type="ChEBI" id="CHEBI:77875"/>
    </ligand>
</feature>
<feature type="binding site" evidence="1">
    <location>
        <position position="143"/>
    </location>
    <ligand>
        <name>iminosuccinate</name>
        <dbReference type="ChEBI" id="CHEBI:77875"/>
    </ligand>
</feature>
<feature type="binding site" evidence="1">
    <location>
        <position position="186"/>
    </location>
    <ligand>
        <name>[4Fe-4S] cluster</name>
        <dbReference type="ChEBI" id="CHEBI:49883"/>
    </ligand>
</feature>
<feature type="binding site" evidence="1">
    <location>
        <begin position="212"/>
        <end position="214"/>
    </location>
    <ligand>
        <name>iminosuccinate</name>
        <dbReference type="ChEBI" id="CHEBI:77875"/>
    </ligand>
</feature>
<feature type="binding site" evidence="1">
    <location>
        <position position="229"/>
    </location>
    <ligand>
        <name>iminosuccinate</name>
        <dbReference type="ChEBI" id="CHEBI:77875"/>
    </ligand>
</feature>
<feature type="binding site" evidence="1">
    <location>
        <position position="279"/>
    </location>
    <ligand>
        <name>[4Fe-4S] cluster</name>
        <dbReference type="ChEBI" id="CHEBI:49883"/>
    </ligand>
</feature>
<name>NADA_CYAP4</name>
<proteinExistence type="inferred from homology"/>
<keyword id="KW-0004">4Fe-4S</keyword>
<keyword id="KW-0963">Cytoplasm</keyword>
<keyword id="KW-0408">Iron</keyword>
<keyword id="KW-0411">Iron-sulfur</keyword>
<keyword id="KW-0479">Metal-binding</keyword>
<keyword id="KW-0662">Pyridine nucleotide biosynthesis</keyword>
<keyword id="KW-0808">Transferase</keyword>
<accession>B8HNE6</accession>
<dbReference type="EC" id="2.5.1.72" evidence="1"/>
<dbReference type="EMBL" id="CP001344">
    <property type="protein sequence ID" value="ACL47273.1"/>
    <property type="molecule type" value="Genomic_DNA"/>
</dbReference>
<dbReference type="SMR" id="B8HNE6"/>
<dbReference type="STRING" id="395961.Cyan7425_4975"/>
<dbReference type="KEGG" id="cyn:Cyan7425_4975"/>
<dbReference type="eggNOG" id="COG0379">
    <property type="taxonomic scope" value="Bacteria"/>
</dbReference>
<dbReference type="HOGENOM" id="CLU_047382_0_0_3"/>
<dbReference type="UniPathway" id="UPA00253">
    <property type="reaction ID" value="UER00327"/>
</dbReference>
<dbReference type="GO" id="GO:0005829">
    <property type="term" value="C:cytosol"/>
    <property type="evidence" value="ECO:0007669"/>
    <property type="project" value="TreeGrafter"/>
</dbReference>
<dbReference type="GO" id="GO:0051539">
    <property type="term" value="F:4 iron, 4 sulfur cluster binding"/>
    <property type="evidence" value="ECO:0007669"/>
    <property type="project" value="UniProtKB-KW"/>
</dbReference>
<dbReference type="GO" id="GO:0046872">
    <property type="term" value="F:metal ion binding"/>
    <property type="evidence" value="ECO:0007669"/>
    <property type="project" value="UniProtKB-KW"/>
</dbReference>
<dbReference type="GO" id="GO:0008987">
    <property type="term" value="F:quinolinate synthetase A activity"/>
    <property type="evidence" value="ECO:0007669"/>
    <property type="project" value="UniProtKB-UniRule"/>
</dbReference>
<dbReference type="GO" id="GO:0034628">
    <property type="term" value="P:'de novo' NAD biosynthetic process from L-aspartate"/>
    <property type="evidence" value="ECO:0007669"/>
    <property type="project" value="TreeGrafter"/>
</dbReference>
<dbReference type="FunFam" id="3.40.50.10800:FF:000003">
    <property type="entry name" value="Quinolinate synthase A"/>
    <property type="match status" value="1"/>
</dbReference>
<dbReference type="Gene3D" id="3.40.50.10800">
    <property type="entry name" value="NadA-like"/>
    <property type="match status" value="3"/>
</dbReference>
<dbReference type="HAMAP" id="MF_00568">
    <property type="entry name" value="NadA_type2"/>
    <property type="match status" value="1"/>
</dbReference>
<dbReference type="InterPro" id="IPR003473">
    <property type="entry name" value="NadA"/>
</dbReference>
<dbReference type="InterPro" id="IPR036094">
    <property type="entry name" value="NadA_sf"/>
</dbReference>
<dbReference type="InterPro" id="IPR023066">
    <property type="entry name" value="Quinolinate_synth_type2"/>
</dbReference>
<dbReference type="NCBIfam" id="TIGR00550">
    <property type="entry name" value="nadA"/>
    <property type="match status" value="1"/>
</dbReference>
<dbReference type="NCBIfam" id="NF006878">
    <property type="entry name" value="PRK09375.1-2"/>
    <property type="match status" value="1"/>
</dbReference>
<dbReference type="PANTHER" id="PTHR30573:SF0">
    <property type="entry name" value="QUINOLINATE SYNTHASE, CHLOROPLASTIC"/>
    <property type="match status" value="1"/>
</dbReference>
<dbReference type="PANTHER" id="PTHR30573">
    <property type="entry name" value="QUINOLINATE SYNTHETASE A"/>
    <property type="match status" value="1"/>
</dbReference>
<dbReference type="Pfam" id="PF02445">
    <property type="entry name" value="NadA"/>
    <property type="match status" value="1"/>
</dbReference>
<dbReference type="SUPFAM" id="SSF142754">
    <property type="entry name" value="NadA-like"/>
    <property type="match status" value="1"/>
</dbReference>
<sequence length="322" mass="36033">MIVFATAPIQTERPRLPQDLFGAIADLKRELNAVILAHYYQEPDIQDVADYIGDSLGLSQQAASTNAEVIVFAGVHFMAETAKILNPDKQVLLPDLEAGCSLAESCPPANFAEFKAAHRNHLVISYINCTAEIKAMSDIICTSSNAVKIVRQIPPEQPIIFAPDRNLGRYVMAQTGREMVLWQGSCIVHETFSEKKIIQLQLQHPEAEVIAHPECEAAVLNRARFIGSTTALLNYVQKSVSPAFIVATEPGIIHQMQRQNPDKLYIPAPPFNNCNCNECPFMRLNTLEKLYWAMRRRAPEVTVPETIRLQALRPIQRMLEMS</sequence>
<evidence type="ECO:0000255" key="1">
    <source>
        <dbReference type="HAMAP-Rule" id="MF_00568"/>
    </source>
</evidence>